<accession>Q04350</accession>
<comment type="function">
    <text evidence="3">Papain-like protease p48 is a cysteine protease of the peptidase family C8.</text>
</comment>
<comment type="catalytic activity">
    <reaction>
        <text>RNA(n) + a ribonucleoside 5'-triphosphate = RNA(n+1) + diphosphate</text>
        <dbReference type="Rhea" id="RHEA:21248"/>
        <dbReference type="Rhea" id="RHEA-COMP:14527"/>
        <dbReference type="Rhea" id="RHEA-COMP:17342"/>
        <dbReference type="ChEBI" id="CHEBI:33019"/>
        <dbReference type="ChEBI" id="CHEBI:61557"/>
        <dbReference type="ChEBI" id="CHEBI:140395"/>
        <dbReference type="EC" id="2.7.7.48"/>
    </reaction>
</comment>
<comment type="catalytic activity">
    <reaction>
        <text>ATP + H2O = ADP + phosphate + H(+)</text>
        <dbReference type="Rhea" id="RHEA:13065"/>
        <dbReference type="ChEBI" id="CHEBI:15377"/>
        <dbReference type="ChEBI" id="CHEBI:15378"/>
        <dbReference type="ChEBI" id="CHEBI:30616"/>
        <dbReference type="ChEBI" id="CHEBI:43474"/>
        <dbReference type="ChEBI" id="CHEBI:456216"/>
        <dbReference type="EC" id="3.6.4.13"/>
    </reaction>
</comment>
<comment type="subcellular location">
    <molecule>Putative RNA-directed RNA polymerase/helicase</molecule>
    <subcellularLocation>
        <location evidence="6">Host membrane</location>
        <topology evidence="6">Multi-pass membrane protein</topology>
    </subcellularLocation>
</comment>
<comment type="PTM">
    <text evidence="5">Papain-like protease p48 is autocatalytically processed. The putative RNA-directed RNA polymerase/helicase may be further processed.</text>
</comment>
<comment type="miscellaneous">
    <text>Hypoviruses induce hypovirulence in their fungal host Cryphonectria parasitica. The consequence is attenuation of the related fungal disease, chestnut blight, that causes cankers that enlarge and kill branches and trunks. The virus-like genetic elements consist of cytoplasmically replicating double-stranded RNA.</text>
</comment>
<comment type="miscellaneous">
    <text>CHV-1 strain EP713 is a highly hypovirulent strain.</text>
</comment>
<comment type="similarity">
    <text evidence="6">In the C-terminal section; belongs to the DEAD box helicase family.</text>
</comment>
<evidence type="ECO:0000255" key="1"/>
<evidence type="ECO:0000255" key="2">
    <source>
        <dbReference type="PROSITE-ProRule" id="PRU00541"/>
    </source>
</evidence>
<evidence type="ECO:0000255" key="3">
    <source>
        <dbReference type="PROSITE-ProRule" id="PRU01223"/>
    </source>
</evidence>
<evidence type="ECO:0000256" key="4">
    <source>
        <dbReference type="SAM" id="MobiDB-lite"/>
    </source>
</evidence>
<evidence type="ECO:0000269" key="5">
    <source>
    </source>
</evidence>
<evidence type="ECO:0000305" key="6"/>
<organism>
    <name type="scientific">Cryphonectria hypovirus 1 (strain EP713)</name>
    <name type="common">CHV-1/EP713</name>
    <name type="synonym">Chestnut blight fungus hypovirulence-associated virus</name>
    <dbReference type="NCBI Taxonomy" id="12478"/>
    <lineage>
        <taxon>Viruses</taxon>
        <taxon>Riboviria</taxon>
        <taxon>Orthornavirae</taxon>
        <taxon>Pisuviricota</taxon>
        <taxon>Duplopiviricetes</taxon>
        <taxon>Durnavirales</taxon>
        <taxon>Hypoviridae</taxon>
        <taxon>Alphahypovirus</taxon>
        <taxon>Alphahypovirus cryphonectriae</taxon>
    </lineage>
</organism>
<organismHost>
    <name type="scientific">Cryphonectria parasitica</name>
    <name type="common">Chestnut blight fungus</name>
    <name type="synonym">Endothia parasitica</name>
    <dbReference type="NCBI Taxonomy" id="5116"/>
</organismHost>
<sequence>MYKEAERPIEVWRTQVMDGPTWTALSESCRDRLFFASGEGGEHMTLDIIQPDSYTKIRLFRSGRFEVSVDGKSFGQGGNRYRFVFRYDSLLSTPFGYPAEDKEIALQDYNHKQLLGEMFLKLPDSYVDGRPIAEAFFRYVDDLKWDVGVFRDRRSLTELHLPASSGLTTAQVSVAKLEWPPLPIIQAQPTILAGIIDNFKICFPVNGKWIYGQGLSWTRYDGDASVPTSLLSNRQHARFWNEKDIPTGLKLSKEGFIKLWAQKSRKWQDHMARSIGLSHEAAVELVRATRVNEAKPHLVPMEEAKEAPRQQLVPRRSTFVDNHEEEVEIDTLRVPVEEGRCFELLFNNQVTPAIFDKKPLLKDVLGVFEENVCTMDSLEISHSDQCVHIVAGETFRNYDEIKAVLEVILENEPDILVGAEEGSVADYVKAGKHFLFENHQWVRNGLKLAKGLAEPGQRAKDNTNPSTPRPIEDADYIHPFDNGQPLPGRSDQWVSGFEVTRLRHHDEMPHIRSVRNTGIHGLPGDFLSNYPRLPTPVFHRLRDLWDDVIGILMKLEFGDNCSPVLNVTANADWVRSETTINFISDQPGKAQSRPREDGGFDILVPCRGIATRSIRLLPLFIRLPNRFRAVALLNGRQSDYDNYGWPVFNPVIPLPQMDSFYVEAVAAGRSMYPPGFLLGRYDALEYLVHTATVYGAEEAFLLPFTHHVRVYPPPRPGREIPFGSWCKNYKFEAERFWYDADWKLRVHETNHDFDRLIEITKTCRRNPPEENLQAKLEDTARKVCSVWQYNIMIASSVAFLVPLYFTLYVPYLQFYLHVDPGDYILLPPVLWLVWTNLCYGYACDAWCRLFFFVEEAGKKELVHSSEEFSSDPSSTLLIPTMGTRGDHVPPRFFANMAVLAGVKTHLLKLQTATYGDLENLKKGKLGSLLPGYLQNHYSVLRGYKAAFTPHVELDMPNATSYNLAPPRSYINKIRYLTDENRSGASMIDRAVTWFAEELADTFWPDWQIGCLRGCNLPRSADGVSLITKQPNLKTGKIGWLHGSADPAVVPKDIRDKYPLVPNGDHNEIFRHYDKIYMPGGAGAVQTAIACGCEVVVTDVNLDRDYHTMPTQKDFHQPSILPYFAWLWRQGFDVKLPRVLLVIGWLKFHYSIRYKHLEFAADFVIRAGLFWWYGCLHLLPFMAAAIMAPRFVKKYLVGMAWLTEPGLLMLKALWRFPIFMVTPRWMLPFIVTVSVYNWWWPLSQDGLNYASKRFELIFEPVTRGKHTFSYPFGHWCLRDTNSMIVYEGKFVNPSETSIGSPFKLSKSVRPVRPGAVFHLVPFHVQKLLDSMDEAPLPYSANHNCTTVILKGIMYRSALGFVFAYMVSWAVYLVLRPPQAAATVYHWVYPERSWDTSRLYHLLLGFAAGGTVPMEVIDEEHVEEKPSVAGQSEPAAEIDNDKISDYDQEWWGSQDSIDTVVNDLCYLLSFLKDTAIPEEVKLDVVELAYTQLVQDEKERIPEPKGTKILDMPNWKPGNWAKLIDETHRVLSQFTQYTPRVLNELVVWLKGLGENLYRVAEPILMLLVRAMRAAKSVSDRATRSVYHCLCHWLDVMYGGSAPTRVKTVWGLTGLVASGMTSQKAILAQNIAMMEYQGRGNFLDDYDNFVSNIKEPGKGLPGINTIGGPQRRPIRYKNPVMSHQAAEICGLKPGEYEVDDRYQERINDYLAEGIPQAVDGVLFGDRNPDRIARSISRYEPEYSGCSPEDKALVEDTARAMFEQWPEVFADRDIMLPKGVELYIKEKYSAGTPFISSFYKSRKALKQAGVMDVIRKNALECISTGKYPTQFYHAFAKSQAVPGQPLLAPRMKDLRTVVSEDLSAYMVDQIFQIEANKRITWETYGAGSGMPLSQSMARIWDELHDLRKREGGQFIIADATAYDSNCKPALFHGAGKLVELGFQNHPSGKGRQFAQVVQCKFEAMQNAWVMGITEPSYTALTFHVPDVAVRHELESKYPAHFATFSELLAHNNVNVTEWKRLSWEERKACARDMQAVPGKVFLTNDPALRLQGSSWQGSFTTEPKRDEFRKYQTYFYDSKAAMREDIKRIVFANREVISNVHHKNRGGGTGQSATSWDNTATFKLGVISAWARATGKPPKDFFCSNRLYNTSDDTVWWSKDLLSSAEVDRFKQAAADFGILLEIGSTKKITEVEYLSKLPRRPTAEDSADYRAWRQGRIENMRSSGRFSEEQLLSIEREQLPQFLMVQNPTAILMRRTAFRYYQSSPSKFLYTSCERGAGHALVTAFQPALYKRFAIEYAEDLNRLCKEHHINQRYELVSQQDRMKMQVINVNPNWKRNFKLSPRQEAFLRWIRQAKFPSYRQVLDIHLRIRDPDPSAHDRFIAKLDRAWRNPDEGIRDIVDGVYRYTDMIPEEFKRFMPSTDMLYAENPWHTHNQYVEKFIYLKLLETTTVDELTFAQFDAVAKESPYGICMNTIKFWEDLRDPDYLKDLLASEAMIDKVRIYQGMTVIISAMYFAMHWVELFIQSLFLIGPLYNLFMWSFWGLSKVYGLANTFYWHGKARSSREISSILPRDPYMWSKRFVSTMADFIPERFALGIVPVTLVLDGLAEIIEVLFGRMWRLFANLKSVGTDFSDARSGKSLNVPSNPWAAYAHTYATKAIEHGHVTVAAKTASGKSTFFPAAVWAERRNIGIKKLWIVMPRKILRDNWEIPFDIRSQIVKRGKTLDPSADIYVTTYGHFRTRIGGLVPRDNLVFFDEFHEMDGFMLQDVEDWKGPTIFMSATPVALHGMAGIPFLEPTLPKRFNLTVYKVDSDDVLEMWNRARNQFADQPELLARPMIIVPTYNELKKTIAGLENLDRSITWHEVSSNSPLVPKTGGLVCTPYVQTGIDIKPAPSILIDSGRDVIVHKGRLVTPHPYTDEKTNEQRVNRVGRTMDGVVIQPQLAGTGNPPVKYPSGIFFSSELVAGQYKVPRLTKVNGCVHPELPYMSIKYTSELSDPAKAREEEQSVTKSLLFIHLMALAGVRQSEWALRYNRYFELHLPFGEDEDHLERILTSGKLRYANHIPVDMAMQLLGNGHVTWGIGGVPTITRPRYPCDGMWVEDPSSRKSYAHKVLLHQREHAEIGMWQAQVNELRAQNLALQSQLRSACTRRSTAGRILRHTRPPDIPVCG</sequence>
<keyword id="KW-0067">ATP-binding</keyword>
<keyword id="KW-0903">Direct protein sequencing</keyword>
<keyword id="KW-0347">Helicase</keyword>
<keyword id="KW-1043">Host membrane</keyword>
<keyword id="KW-0378">Hydrolase</keyword>
<keyword id="KW-0472">Membrane</keyword>
<keyword id="KW-0547">Nucleotide-binding</keyword>
<keyword id="KW-0548">Nucleotidyltransferase</keyword>
<keyword id="KW-0645">Protease</keyword>
<keyword id="KW-1185">Reference proteome</keyword>
<keyword id="KW-0696">RNA-directed RNA polymerase</keyword>
<keyword id="KW-0788">Thiol protease</keyword>
<keyword id="KW-0808">Transferase</keyword>
<keyword id="KW-0812">Transmembrane</keyword>
<keyword id="KW-1133">Transmembrane helix</keyword>
<reference key="1">
    <citation type="journal article" date="1991" name="EMBO J.">
        <title>Virus-like genetic organization and expression strategy for a double-stranded RNA genetic element associated with biological control of chestnut blight.</title>
        <authorList>
            <person name="Shapira R."/>
            <person name="Choi G.H."/>
            <person name="Nuss D.L."/>
        </authorList>
    </citation>
    <scope>NUCLEOTIDE SEQUENCE [GENOMIC RNA]</scope>
</reference>
<reference key="2">
    <citation type="journal article" date="1991" name="J. Biol. Chem.">
        <title>Gene expression by a hypovirulence-associated virus of the chestnut blight fungus involves two papain-like protease activities. Essential residues and cleavage site requirements for p48 autoproteolysis.</title>
        <authorList>
            <person name="Shapira R."/>
            <person name="Nuss D.L."/>
        </authorList>
    </citation>
    <scope>PROTEOLYTIC PROCESSING OF POLYPROTEIN</scope>
    <scope>PROTEIN SEQUENCE OF 419-428</scope>
    <scope>MUTAGENESIS OF ASP-321; HIS-323; ASP-330; CYS-341; ASP-356; ASP-363; CYS-373; ASP-376; SER-377; SER-381; HIS-382; SER-383; ASP-384; CYS-386; HIS-388; ASP-399; PRO-413; ASP-414; ILE-415; LEU-416; VAL-417; GLY-418; ALA-419; GLU-420; GLU-421 AND GLY-422</scope>
</reference>
<dbReference type="EC" id="3.4.22.-" evidence="3"/>
<dbReference type="EC" id="2.7.7.48"/>
<dbReference type="EC" id="3.6.4.13"/>
<dbReference type="EMBL" id="M57938">
    <property type="protein sequence ID" value="AAA67458.1"/>
    <property type="molecule type" value="Genomic_RNA"/>
</dbReference>
<dbReference type="PIR" id="S15010">
    <property type="entry name" value="S15010"/>
</dbReference>
<dbReference type="RefSeq" id="NP_041091.1">
    <property type="nucleotide sequence ID" value="NC_001492.1"/>
</dbReference>
<dbReference type="MEROPS" id="C08.001"/>
<dbReference type="GeneID" id="1403614"/>
<dbReference type="KEGG" id="vg:1403614"/>
<dbReference type="Proteomes" id="UP000007251">
    <property type="component" value="Segment"/>
</dbReference>
<dbReference type="GO" id="GO:0033644">
    <property type="term" value="C:host cell membrane"/>
    <property type="evidence" value="ECO:0007669"/>
    <property type="project" value="UniProtKB-SubCell"/>
</dbReference>
<dbReference type="GO" id="GO:0016020">
    <property type="term" value="C:membrane"/>
    <property type="evidence" value="ECO:0007669"/>
    <property type="project" value="UniProtKB-KW"/>
</dbReference>
<dbReference type="GO" id="GO:0005524">
    <property type="term" value="F:ATP binding"/>
    <property type="evidence" value="ECO:0007669"/>
    <property type="project" value="UniProtKB-KW"/>
</dbReference>
<dbReference type="GO" id="GO:0016887">
    <property type="term" value="F:ATP hydrolysis activity"/>
    <property type="evidence" value="ECO:0007669"/>
    <property type="project" value="RHEA"/>
</dbReference>
<dbReference type="GO" id="GO:0008234">
    <property type="term" value="F:cysteine-type peptidase activity"/>
    <property type="evidence" value="ECO:0007669"/>
    <property type="project" value="UniProtKB-KW"/>
</dbReference>
<dbReference type="GO" id="GO:0003724">
    <property type="term" value="F:RNA helicase activity"/>
    <property type="evidence" value="ECO:0007669"/>
    <property type="project" value="UniProtKB-EC"/>
</dbReference>
<dbReference type="GO" id="GO:0003968">
    <property type="term" value="F:RNA-directed RNA polymerase activity"/>
    <property type="evidence" value="ECO:0007669"/>
    <property type="project" value="UniProtKB-KW"/>
</dbReference>
<dbReference type="GO" id="GO:0006508">
    <property type="term" value="P:proteolysis"/>
    <property type="evidence" value="ECO:0007669"/>
    <property type="project" value="UniProtKB-KW"/>
</dbReference>
<dbReference type="Gene3D" id="3.40.50.300">
    <property type="entry name" value="P-loop containing nucleotide triphosphate hydrolases"/>
    <property type="match status" value="1"/>
</dbReference>
<dbReference type="InterPro" id="IPR043502">
    <property type="entry name" value="DNA/RNA_pol_sf"/>
</dbReference>
<dbReference type="InterPro" id="IPR021912">
    <property type="entry name" value="DUF3525"/>
</dbReference>
<dbReference type="InterPro" id="IPR014001">
    <property type="entry name" value="Helicase_ATP-bd"/>
</dbReference>
<dbReference type="InterPro" id="IPR027417">
    <property type="entry name" value="P-loop_NTPase"/>
</dbReference>
<dbReference type="InterPro" id="IPR005315">
    <property type="entry name" value="Peptidase_C8"/>
</dbReference>
<dbReference type="Pfam" id="PF12039">
    <property type="entry name" value="DUF3525"/>
    <property type="match status" value="2"/>
</dbReference>
<dbReference type="Pfam" id="PF03569">
    <property type="entry name" value="Peptidase_C8"/>
    <property type="match status" value="1"/>
</dbReference>
<dbReference type="SUPFAM" id="SSF56672">
    <property type="entry name" value="DNA/RNA polymerases"/>
    <property type="match status" value="1"/>
</dbReference>
<dbReference type="SUPFAM" id="SSF52540">
    <property type="entry name" value="P-loop containing nucleoside triphosphate hydrolases"/>
    <property type="match status" value="1"/>
</dbReference>
<dbReference type="PROSITE" id="PS51875">
    <property type="entry name" value="HAV_P48_PRO"/>
    <property type="match status" value="1"/>
</dbReference>
<dbReference type="PROSITE" id="PS51192">
    <property type="entry name" value="HELICASE_ATP_BIND_1"/>
    <property type="match status" value="1"/>
</dbReference>
<protein>
    <recommendedName>
        <fullName>ORFB polyprotein</fullName>
    </recommendedName>
    <component>
        <recommendedName>
            <fullName evidence="3">Papain-like protease p48</fullName>
            <ecNumber evidence="3">3.4.22.-</ecNumber>
        </recommendedName>
    </component>
    <component>
        <recommendedName>
            <fullName>Putative RNA-directed RNA polymerase/helicase</fullName>
            <ecNumber>2.7.7.48</ecNumber>
            <ecNumber>3.6.4.13</ecNumber>
        </recommendedName>
    </component>
</protein>
<name>POLB_CHPVE</name>
<feature type="chain" id="PRO_0000038881" description="Papain-like protease p48">
    <location>
        <begin position="1"/>
        <end position="418"/>
    </location>
</feature>
<feature type="chain" id="PRO_0000038882" description="Putative RNA-directed RNA polymerase/helicase" evidence="1">
    <location>
        <begin position="419"/>
        <end position="3165"/>
    </location>
</feature>
<feature type="transmembrane region" description="Helical" evidence="1">
    <location>
        <begin position="791"/>
        <end position="811"/>
    </location>
</feature>
<feature type="transmembrane region" description="Helical" evidence="1">
    <location>
        <begin position="823"/>
        <end position="843"/>
    </location>
</feature>
<feature type="transmembrane region" description="Helical" evidence="1">
    <location>
        <begin position="1166"/>
        <end position="1186"/>
    </location>
</feature>
<feature type="transmembrane region" description="Helical" evidence="1">
    <location>
        <begin position="1193"/>
        <end position="1213"/>
    </location>
</feature>
<feature type="transmembrane region" description="Helical" evidence="1">
    <location>
        <begin position="1215"/>
        <end position="1235"/>
    </location>
</feature>
<feature type="transmembrane region" description="Helical" evidence="1">
    <location>
        <begin position="1356"/>
        <end position="1376"/>
    </location>
</feature>
<feature type="transmembrane region" description="Helical" evidence="1">
    <location>
        <begin position="2495"/>
        <end position="2515"/>
    </location>
</feature>
<feature type="transmembrane region" description="Helical" evidence="1">
    <location>
        <begin position="2517"/>
        <end position="2537"/>
    </location>
</feature>
<feature type="transmembrane region" description="Helical" evidence="1">
    <location>
        <begin position="2590"/>
        <end position="2610"/>
    </location>
</feature>
<feature type="domain" description="Peptidase C8" evidence="3">
    <location>
        <begin position="271"/>
        <end position="418"/>
    </location>
</feature>
<feature type="domain" description="Helicase ATP-binding" evidence="2">
    <location>
        <begin position="2651"/>
        <end position="2796"/>
    </location>
</feature>
<feature type="region of interest" description="Disordered" evidence="4">
    <location>
        <begin position="453"/>
        <end position="472"/>
    </location>
</feature>
<feature type="region of interest" description="RNA-directed RNA polymerase" evidence="1">
    <location>
        <begin position="1793"/>
        <end position="2208"/>
    </location>
</feature>
<feature type="short sequence motif" description="DEFH box">
    <location>
        <begin position="2751"/>
        <end position="2754"/>
    </location>
</feature>
<feature type="active site" description="For papain-like protease p48 activity" evidence="3">
    <location>
        <position position="341"/>
    </location>
</feature>
<feature type="active site" description="For papain-like protease p48 activity" evidence="3">
    <location>
        <position position="388"/>
    </location>
</feature>
<feature type="binding site" evidence="2">
    <location>
        <begin position="2664"/>
        <end position="2671"/>
    </location>
    <ligand>
        <name>ATP</name>
        <dbReference type="ChEBI" id="CHEBI:30616"/>
    </ligand>
</feature>
<feature type="site" description="Cleavage; by papain-like protease p48" evidence="3">
    <location>
        <begin position="418"/>
        <end position="419"/>
    </location>
</feature>
<feature type="mutagenesis site" description="No effect on cleavage." evidence="5">
    <original>D</original>
    <variation>E</variation>
    <location>
        <position position="321"/>
    </location>
</feature>
<feature type="mutagenesis site" description="No effect on cleavage." evidence="5">
    <original>H</original>
    <variation>S</variation>
    <location>
        <position position="323"/>
    </location>
</feature>
<feature type="mutagenesis site" description="No effect on cleavage." evidence="5">
    <original>D</original>
    <variation>E</variation>
    <location>
        <position position="330"/>
    </location>
</feature>
<feature type="mutagenesis site" description="Complete loss of cleavage." evidence="5">
    <original>C</original>
    <variation>S</variation>
    <location>
        <position position="341"/>
    </location>
</feature>
<feature type="mutagenesis site" description="No effect on cleavage." evidence="5">
    <original>D</original>
    <variation>E</variation>
    <location>
        <position position="356"/>
    </location>
</feature>
<feature type="mutagenesis site" description="No effect on cleavage." evidence="5">
    <original>D</original>
    <variation>E</variation>
    <location>
        <position position="363"/>
    </location>
</feature>
<feature type="mutagenesis site" description="Partial loss of cleavage." evidence="5">
    <original>C</original>
    <variation>S</variation>
    <location>
        <position position="373"/>
    </location>
</feature>
<feature type="mutagenesis site" description="No effect on cleavage." evidence="5">
    <original>D</original>
    <variation>E</variation>
    <location>
        <position position="376"/>
    </location>
</feature>
<feature type="mutagenesis site" description="No effect on cleavage." evidence="5">
    <original>S</original>
    <variation>T</variation>
    <location>
        <position position="377"/>
    </location>
</feature>
<feature type="mutagenesis site" description="No effect on cleavage." evidence="5">
    <original>S</original>
    <variation>T</variation>
    <location>
        <position position="381"/>
    </location>
</feature>
<feature type="mutagenesis site" description="No effect on cleavage." evidence="5">
    <original>H</original>
    <variation>S</variation>
    <location>
        <position position="382"/>
    </location>
</feature>
<feature type="mutagenesis site" description="No effect on cleavage." evidence="5">
    <original>S</original>
    <variation>T</variation>
    <location>
        <position position="383"/>
    </location>
</feature>
<feature type="mutagenesis site" description="No effect on cleavage." evidence="5">
    <original>D</original>
    <variation>E</variation>
    <location>
        <position position="384"/>
    </location>
</feature>
<feature type="mutagenesis site" description="Partial loss of cleavage." evidence="5">
    <original>C</original>
    <variation>S</variation>
    <location>
        <position position="386"/>
    </location>
</feature>
<feature type="mutagenesis site" description="Complete loss of cleavage." evidence="5">
    <original>H</original>
    <variation>S</variation>
    <location>
        <position position="388"/>
    </location>
</feature>
<feature type="mutagenesis site" description="No effect on cleavage." evidence="5">
    <original>D</original>
    <variation>E</variation>
    <location>
        <position position="399"/>
    </location>
</feature>
<feature type="mutagenesis site" description="No effect on cleavage." evidence="5">
    <original>P</original>
    <variation>A</variation>
    <variation>R</variation>
    <variation>S</variation>
    <location>
        <position position="413"/>
    </location>
</feature>
<feature type="mutagenesis site" description="No effect on cleavage." evidence="5">
    <original>D</original>
    <variation>A</variation>
    <variation>R</variation>
    <variation>S</variation>
    <location>
        <position position="414"/>
    </location>
</feature>
<feature type="mutagenesis site" description="Complete loss of cleavage." evidence="5">
    <original>I</original>
    <variation>L</variation>
    <variation>R</variation>
    <variation>V</variation>
    <location>
        <position position="415"/>
    </location>
</feature>
<feature type="mutagenesis site" description="No effect on cleavage." evidence="5">
    <original>L</original>
    <variation>A</variation>
    <variation>E</variation>
    <variation>R</variation>
    <variation>S</variation>
    <location>
        <position position="416"/>
    </location>
</feature>
<feature type="mutagenesis site" description="Complete loss of cleavage." evidence="5">
    <original>L</original>
    <variation>G</variation>
    <location>
        <position position="416"/>
    </location>
</feature>
<feature type="mutagenesis site" description="Complete loss of cleavage." evidence="5">
    <original>V</original>
    <variation>A</variation>
    <variation>G</variation>
    <variation>L</variation>
    <variation>M</variation>
    <variation>R</variation>
    <variation>S</variation>
    <location>
        <position position="417"/>
    </location>
</feature>
<feature type="mutagenesis site" description="No effect on cleavage." evidence="5">
    <original>V</original>
    <variation>I</variation>
    <location>
        <position position="417"/>
    </location>
</feature>
<feature type="mutagenesis site" description="Complete loss of cleavage." evidence="5">
    <original>G</original>
    <variation>A</variation>
    <variation>E</variation>
    <variation>R</variation>
    <variation>S</variation>
    <variation>T</variation>
    <variation>V</variation>
    <location>
        <position position="418"/>
    </location>
</feature>
<feature type="mutagenesis site" description="No effect on cleavage." evidence="5">
    <original>A</original>
    <variation>G</variation>
    <variation>L</variation>
    <variation>S</variation>
    <variation>V</variation>
    <location>
        <position position="419"/>
    </location>
</feature>
<feature type="mutagenesis site" description="Complete loss of cleavage." evidence="5">
    <original>A</original>
    <variation>R</variation>
    <location>
        <position position="419"/>
    </location>
</feature>
<feature type="mutagenesis site" description="No effect on cleavage." evidence="5">
    <original>E</original>
    <variation>A</variation>
    <variation>R</variation>
    <variation>S</variation>
    <location>
        <position position="420"/>
    </location>
</feature>
<feature type="mutagenesis site" description="Complete loss of cleavage." evidence="5">
    <original>E</original>
    <variation>P</variation>
    <location>
        <position position="420"/>
    </location>
</feature>
<feature type="mutagenesis site" description="No effect on cleavage." evidence="5">
    <original>E</original>
    <variation>A</variation>
    <location>
        <position position="421"/>
    </location>
</feature>
<feature type="mutagenesis site" description="Partial loss of cleavage." evidence="5">
    <original>E</original>
    <variation>P</variation>
    <location>
        <position position="421"/>
    </location>
</feature>
<feature type="mutagenesis site" description="No effect on cleavage." evidence="5">
    <original>G</original>
    <variation>P</variation>
    <location>
        <position position="422"/>
    </location>
</feature>
<proteinExistence type="evidence at protein level"/>